<sequence length="367" mass="39921">MGYTLPVFATAAAVAALRCLTEGACPQQVTLALLRPNRCETLPIAQGACLDAQQALAITYSEPSDALDLTRYTPIWAWVRWQDPVTAPKIQIEGGFGVGRDRATGKAAIYRYARLLLTTNLLLYCPKERAIAVTIVLPQGRDLAERTSNAAFGIVEGLSLLGTTGIAQPLTAPEQLDRYREDLAEKAAQSSTLVFCIGENGLQVAQQLQIPPSRCVKTANWLGPMLVAAAHYEVQQLLLLGYHGKLIKLAAGIFHTHHHLADARQEILTAFCALAGLDLEMLHQVWQAPTVEAALKFLERMVPHVLPEILSHIAHRIDQRATAYIHAHCAAPIGRSLQVGCALFGRDRQIVATSGAGNIILREISIR</sequence>
<comment type="function">
    <text evidence="1">Catalyzes the methylation of C-1 in cobalt-precorrin-5B to form cobalt-precorrin-6A.</text>
</comment>
<comment type="catalytic activity">
    <reaction evidence="1">
        <text>Co-precorrin-5B + S-adenosyl-L-methionine = Co-precorrin-6A + S-adenosyl-L-homocysteine</text>
        <dbReference type="Rhea" id="RHEA:26285"/>
        <dbReference type="ChEBI" id="CHEBI:57856"/>
        <dbReference type="ChEBI" id="CHEBI:59789"/>
        <dbReference type="ChEBI" id="CHEBI:60063"/>
        <dbReference type="ChEBI" id="CHEBI:60064"/>
        <dbReference type="EC" id="2.1.1.195"/>
    </reaction>
</comment>
<comment type="pathway">
    <text evidence="1">Cofactor biosynthesis; adenosylcobalamin biosynthesis; cob(II)yrinate a,c-diamide from sirohydrochlorin (anaerobic route): step 6/10.</text>
</comment>
<comment type="similarity">
    <text evidence="1">Belongs to the CbiD family.</text>
</comment>
<gene>
    <name evidence="1" type="primary">cbiD</name>
    <name type="ordered locus">tlr0767</name>
</gene>
<accession>Q8DKT8</accession>
<name>CBID_THEVB</name>
<feature type="chain" id="PRO_0000141685" description="Cobalt-precorrin-5B C(1)-methyltransferase">
    <location>
        <begin position="1"/>
        <end position="367"/>
    </location>
</feature>
<protein>
    <recommendedName>
        <fullName evidence="1">Cobalt-precorrin-5B C(1)-methyltransferase</fullName>
        <ecNumber evidence="1">2.1.1.195</ecNumber>
    </recommendedName>
    <alternativeName>
        <fullName evidence="1">Cobalt-precorrin-6A synthase</fullName>
    </alternativeName>
</protein>
<reference key="1">
    <citation type="journal article" date="2002" name="DNA Res.">
        <title>Complete genome structure of the thermophilic cyanobacterium Thermosynechococcus elongatus BP-1.</title>
        <authorList>
            <person name="Nakamura Y."/>
            <person name="Kaneko T."/>
            <person name="Sato S."/>
            <person name="Ikeuchi M."/>
            <person name="Katoh H."/>
            <person name="Sasamoto S."/>
            <person name="Watanabe A."/>
            <person name="Iriguchi M."/>
            <person name="Kawashima K."/>
            <person name="Kimura T."/>
            <person name="Kishida Y."/>
            <person name="Kiyokawa C."/>
            <person name="Kohara M."/>
            <person name="Matsumoto M."/>
            <person name="Matsuno A."/>
            <person name="Nakazaki N."/>
            <person name="Shimpo S."/>
            <person name="Sugimoto M."/>
            <person name="Takeuchi C."/>
            <person name="Yamada M."/>
            <person name="Tabata S."/>
        </authorList>
    </citation>
    <scope>NUCLEOTIDE SEQUENCE [LARGE SCALE GENOMIC DNA]</scope>
    <source>
        <strain>NIES-2133 / IAM M-273 / BP-1</strain>
    </source>
</reference>
<evidence type="ECO:0000255" key="1">
    <source>
        <dbReference type="HAMAP-Rule" id="MF_00787"/>
    </source>
</evidence>
<proteinExistence type="inferred from homology"/>
<keyword id="KW-0169">Cobalamin biosynthesis</keyword>
<keyword id="KW-0489">Methyltransferase</keyword>
<keyword id="KW-1185">Reference proteome</keyword>
<keyword id="KW-0949">S-adenosyl-L-methionine</keyword>
<keyword id="KW-0808">Transferase</keyword>
<organism>
    <name type="scientific">Thermosynechococcus vestitus (strain NIES-2133 / IAM M-273 / BP-1)</name>
    <dbReference type="NCBI Taxonomy" id="197221"/>
    <lineage>
        <taxon>Bacteria</taxon>
        <taxon>Bacillati</taxon>
        <taxon>Cyanobacteriota</taxon>
        <taxon>Cyanophyceae</taxon>
        <taxon>Acaryochloridales</taxon>
        <taxon>Thermosynechococcaceae</taxon>
        <taxon>Thermosynechococcus</taxon>
    </lineage>
</organism>
<dbReference type="EC" id="2.1.1.195" evidence="1"/>
<dbReference type="EMBL" id="BA000039">
    <property type="protein sequence ID" value="BAC08318.1"/>
    <property type="molecule type" value="Genomic_DNA"/>
</dbReference>
<dbReference type="RefSeq" id="NP_681556.1">
    <property type="nucleotide sequence ID" value="NC_004113.1"/>
</dbReference>
<dbReference type="RefSeq" id="WP_011056612.1">
    <property type="nucleotide sequence ID" value="NC_004113.1"/>
</dbReference>
<dbReference type="SMR" id="Q8DKT8"/>
<dbReference type="STRING" id="197221.gene:10747358"/>
<dbReference type="EnsemblBacteria" id="BAC08318">
    <property type="protein sequence ID" value="BAC08318"/>
    <property type="gene ID" value="BAC08318"/>
</dbReference>
<dbReference type="KEGG" id="tel:tlr0767"/>
<dbReference type="PATRIC" id="fig|197221.4.peg.806"/>
<dbReference type="eggNOG" id="COG1903">
    <property type="taxonomic scope" value="Bacteria"/>
</dbReference>
<dbReference type="UniPathway" id="UPA00148">
    <property type="reaction ID" value="UER00227"/>
</dbReference>
<dbReference type="Proteomes" id="UP000000440">
    <property type="component" value="Chromosome"/>
</dbReference>
<dbReference type="GO" id="GO:0043780">
    <property type="term" value="F:cobalt-precorrin-5B C1-methyltransferase activity"/>
    <property type="evidence" value="ECO:0007669"/>
    <property type="project" value="RHEA"/>
</dbReference>
<dbReference type="GO" id="GO:0019251">
    <property type="term" value="P:anaerobic cobalamin biosynthetic process"/>
    <property type="evidence" value="ECO:0007669"/>
    <property type="project" value="UniProtKB-UniRule"/>
</dbReference>
<dbReference type="GO" id="GO:0032259">
    <property type="term" value="P:methylation"/>
    <property type="evidence" value="ECO:0007669"/>
    <property type="project" value="UniProtKB-KW"/>
</dbReference>
<dbReference type="Gene3D" id="3.30.2110.10">
    <property type="entry name" value="CbiD-like"/>
    <property type="match status" value="1"/>
</dbReference>
<dbReference type="HAMAP" id="MF_00787">
    <property type="entry name" value="CbiD"/>
    <property type="match status" value="1"/>
</dbReference>
<dbReference type="InterPro" id="IPR002748">
    <property type="entry name" value="CbiD"/>
</dbReference>
<dbReference type="InterPro" id="IPR036074">
    <property type="entry name" value="CbiD_sf"/>
</dbReference>
<dbReference type="NCBIfam" id="TIGR00312">
    <property type="entry name" value="cbiD"/>
    <property type="match status" value="1"/>
</dbReference>
<dbReference type="PANTHER" id="PTHR35863">
    <property type="entry name" value="COBALT-PRECORRIN-5B C(1)-METHYLTRANSFERASE"/>
    <property type="match status" value="1"/>
</dbReference>
<dbReference type="PANTHER" id="PTHR35863:SF1">
    <property type="entry name" value="COBALT-PRECORRIN-5B C(1)-METHYLTRANSFERASE"/>
    <property type="match status" value="1"/>
</dbReference>
<dbReference type="Pfam" id="PF01888">
    <property type="entry name" value="CbiD"/>
    <property type="match status" value="1"/>
</dbReference>
<dbReference type="PIRSF" id="PIRSF026782">
    <property type="entry name" value="CbiD"/>
    <property type="match status" value="1"/>
</dbReference>
<dbReference type="SUPFAM" id="SSF111342">
    <property type="entry name" value="CbiD-like"/>
    <property type="match status" value="1"/>
</dbReference>